<organism>
    <name type="scientific">Mus musculus</name>
    <name type="common">Mouse</name>
    <dbReference type="NCBI Taxonomy" id="10090"/>
    <lineage>
        <taxon>Eukaryota</taxon>
        <taxon>Metazoa</taxon>
        <taxon>Chordata</taxon>
        <taxon>Craniata</taxon>
        <taxon>Vertebrata</taxon>
        <taxon>Euteleostomi</taxon>
        <taxon>Mammalia</taxon>
        <taxon>Eutheria</taxon>
        <taxon>Euarchontoglires</taxon>
        <taxon>Glires</taxon>
        <taxon>Rodentia</taxon>
        <taxon>Myomorpha</taxon>
        <taxon>Muroidea</taxon>
        <taxon>Muridae</taxon>
        <taxon>Murinae</taxon>
        <taxon>Mus</taxon>
        <taxon>Mus</taxon>
    </lineage>
</organism>
<protein>
    <recommendedName>
        <fullName>X-ray radiation resistance-associated protein 1</fullName>
    </recommendedName>
</protein>
<gene>
    <name evidence="7" type="primary">Xrra1</name>
</gene>
<keyword id="KW-0175">Coiled coil</keyword>
<keyword id="KW-0963">Cytoplasm</keyword>
<keyword id="KW-0433">Leucine-rich repeat</keyword>
<keyword id="KW-0539">Nucleus</keyword>
<keyword id="KW-1185">Reference proteome</keyword>
<keyword id="KW-0677">Repeat</keyword>
<evidence type="ECO:0000250" key="1">
    <source>
        <dbReference type="UniProtKB" id="Q6P2D8"/>
    </source>
</evidence>
<evidence type="ECO:0000255" key="2"/>
<evidence type="ECO:0000256" key="3">
    <source>
        <dbReference type="SAM" id="MobiDB-lite"/>
    </source>
</evidence>
<evidence type="ECO:0000305" key="4"/>
<evidence type="ECO:0000312" key="5">
    <source>
        <dbReference type="EMBL" id="BAE32677.1"/>
    </source>
</evidence>
<evidence type="ECO:0000312" key="6">
    <source>
        <dbReference type="EMBL" id="DAA00368.1"/>
    </source>
</evidence>
<evidence type="ECO:0000312" key="7">
    <source>
        <dbReference type="MGI" id="MGI:2181647"/>
    </source>
</evidence>
<proteinExistence type="evidence at transcript level"/>
<sequence length="786" mass="88884">MVSSGMYKMDNGKPCLNNCFPAKSLLRLPEEGRGHWIVVRKGSMKKGAAKASTEGQESQKKVSFDTGLKKISRRDSQADVLGHILDRSFLLKHHSARKPSDLCTINVSGMKFSKAKEKDFKHFTSVIYINASENLLPLDVFHTFPVLKELELAFNGIKMVYVKYGDFKTLEFLDLSFNSLTEEAICDLGILPHLRVLLLTGNGLTSLPPNMAVKEQEASMTSLTSKKYILRFPALETLMLDDNKLSNPSCFASLAGLRRLKKLSLDQNKIVRIPYLQQIQLRDGSGDWVTEGPNPQKELQPQMWIFETPDEQPNYTVLPMKKDVDRTEVVFSSYPGFSTSETAKVCSLPPMFEILPVKSLKARNQTLAPPFPELRYLSLAYNKIAKEDAVLPAALFPSLCELVFHNNPLVAHTRGIPPLLKSFLQDRLGIRLVRKKLVKPKHHMLMPRKESRKVKTYIPKVPKHSLVPHHLNMITDSPPSSLMPEPEHSTEDTSHEALFANEGPEGPSLTHRAFVPMPPICSDSTVHSEAVSHQSHTAGLVSSEHPSDDDAKSTESIFLTQVNELPSSTAHRENLEAVNDQRRPSTAPRETKRTRRKQTATSLHNKYDGYEELLTVKPDPAFLEPKGIQKNAQALHRMLKQPLICRSSKPRLDTFQKPYVPKEKRAGRIPILPPRKTRAQLLDDILIRMRDPRNVTEAPLGTVLQRRAQQRLVNQKQYREAKRLLKEFRARYRQLVRSSLRTVFAASPPPRPPTRRALSAGQPKLGRFLEFMDEFCQEPTASDSKE</sequence>
<comment type="function">
    <text evidence="1">May be involved in the response of cells to X-ray radiation.</text>
</comment>
<comment type="subcellular location">
    <subcellularLocation>
        <location evidence="1">Cytoplasm</location>
    </subcellularLocation>
    <subcellularLocation>
        <location evidence="1">Nucleus</location>
    </subcellularLocation>
</comment>
<comment type="sequence caution" evidence="4">
    <conflict type="erroneous initiation">
        <sequence resource="EMBL-CDS" id="DAA00368"/>
    </conflict>
</comment>
<dbReference type="EMBL" id="AK154558">
    <property type="protein sequence ID" value="BAE32677.1"/>
    <property type="molecule type" value="mRNA"/>
</dbReference>
<dbReference type="EMBL" id="BC151014">
    <property type="protein sequence ID" value="AAI51015.1"/>
    <property type="molecule type" value="mRNA"/>
</dbReference>
<dbReference type="EMBL" id="BC151020">
    <property type="protein sequence ID" value="AAI51021.1"/>
    <property type="molecule type" value="mRNA"/>
</dbReference>
<dbReference type="EMBL" id="BK000542">
    <property type="protein sequence ID" value="DAA00368.1"/>
    <property type="status" value="ALT_INIT"/>
    <property type="molecule type" value="mRNA"/>
</dbReference>
<dbReference type="CCDS" id="CCDS52321.1"/>
<dbReference type="RefSeq" id="NP_001157730.1">
    <property type="nucleotide sequence ID" value="NM_001164258.1"/>
</dbReference>
<dbReference type="RefSeq" id="XP_006508070.1">
    <property type="nucleotide sequence ID" value="XM_006508007.4"/>
</dbReference>
<dbReference type="FunCoup" id="Q3U3V8">
    <property type="interactions" value="2319"/>
</dbReference>
<dbReference type="STRING" id="10090.ENSMUSP00000035929"/>
<dbReference type="iPTMnet" id="Q3U3V8"/>
<dbReference type="PhosphoSitePlus" id="Q3U3V8"/>
<dbReference type="PaxDb" id="10090-ENSMUSP00000035929"/>
<dbReference type="ProteomicsDB" id="300015"/>
<dbReference type="Antibodypedia" id="45035">
    <property type="antibodies" value="50 antibodies from 14 providers"/>
</dbReference>
<dbReference type="Ensembl" id="ENSMUST00000036155.10">
    <property type="protein sequence ID" value="ENSMUSP00000035929.9"/>
    <property type="gene ID" value="ENSMUSG00000035211.11"/>
</dbReference>
<dbReference type="GeneID" id="446101"/>
<dbReference type="KEGG" id="mmu:446101"/>
<dbReference type="UCSC" id="uc009ime.2">
    <property type="organism name" value="mouse"/>
</dbReference>
<dbReference type="AGR" id="MGI:2181647"/>
<dbReference type="CTD" id="143570"/>
<dbReference type="MGI" id="MGI:2181647">
    <property type="gene designation" value="Xrra1"/>
</dbReference>
<dbReference type="VEuPathDB" id="HostDB:ENSMUSG00000035211"/>
<dbReference type="eggNOG" id="KOG0619">
    <property type="taxonomic scope" value="Eukaryota"/>
</dbReference>
<dbReference type="GeneTree" id="ENSGT00390000016048"/>
<dbReference type="HOGENOM" id="CLU_015169_0_0_1"/>
<dbReference type="InParanoid" id="Q3U3V8"/>
<dbReference type="OMA" id="FCQEPTS"/>
<dbReference type="OrthoDB" id="1687175at2759"/>
<dbReference type="PhylomeDB" id="Q3U3V8"/>
<dbReference type="TreeFam" id="TF329758"/>
<dbReference type="BioGRID-ORCS" id="446101">
    <property type="hits" value="3 hits in 77 CRISPR screens"/>
</dbReference>
<dbReference type="ChiTaRS" id="Xrra1">
    <property type="organism name" value="mouse"/>
</dbReference>
<dbReference type="PRO" id="PR:Q3U3V8"/>
<dbReference type="Proteomes" id="UP000000589">
    <property type="component" value="Chromosome 7"/>
</dbReference>
<dbReference type="RNAct" id="Q3U3V8">
    <property type="molecule type" value="protein"/>
</dbReference>
<dbReference type="Bgee" id="ENSMUSG00000035211">
    <property type="expression patterns" value="Expressed in spermatid and 44 other cell types or tissues"/>
</dbReference>
<dbReference type="ExpressionAtlas" id="Q3U3V8">
    <property type="expression patterns" value="baseline and differential"/>
</dbReference>
<dbReference type="GO" id="GO:0005737">
    <property type="term" value="C:cytoplasm"/>
    <property type="evidence" value="ECO:0000250"/>
    <property type="project" value="UniProtKB"/>
</dbReference>
<dbReference type="GO" id="GO:0016604">
    <property type="term" value="C:nuclear body"/>
    <property type="evidence" value="ECO:0007669"/>
    <property type="project" value="Ensembl"/>
</dbReference>
<dbReference type="GO" id="GO:0005634">
    <property type="term" value="C:nucleus"/>
    <property type="evidence" value="ECO:0000250"/>
    <property type="project" value="UniProtKB"/>
</dbReference>
<dbReference type="GO" id="GO:0010165">
    <property type="term" value="P:response to X-ray"/>
    <property type="evidence" value="ECO:0000250"/>
    <property type="project" value="UniProtKB"/>
</dbReference>
<dbReference type="FunFam" id="3.80.10.10:FF:002122">
    <property type="entry name" value="X-ray radiation resistance-associated protein 1"/>
    <property type="match status" value="1"/>
</dbReference>
<dbReference type="Gene3D" id="3.80.10.10">
    <property type="entry name" value="Ribonuclease Inhibitor"/>
    <property type="match status" value="2"/>
</dbReference>
<dbReference type="InterPro" id="IPR001611">
    <property type="entry name" value="Leu-rich_rpt"/>
</dbReference>
<dbReference type="InterPro" id="IPR003591">
    <property type="entry name" value="Leu-rich_rpt_typical-subtyp"/>
</dbReference>
<dbReference type="InterPro" id="IPR032675">
    <property type="entry name" value="LRR_dom_sf"/>
</dbReference>
<dbReference type="PANTHER" id="PTHR22710">
    <property type="entry name" value="X-RAY RADIATION RESISTANCE ASSOCIATED PROTEIN 1 XRRA1"/>
    <property type="match status" value="1"/>
</dbReference>
<dbReference type="PANTHER" id="PTHR22710:SF2">
    <property type="entry name" value="X-RAY RADIATION RESISTANCE-ASSOCIATED PROTEIN 1"/>
    <property type="match status" value="1"/>
</dbReference>
<dbReference type="SMART" id="SM00369">
    <property type="entry name" value="LRR_TYP"/>
    <property type="match status" value="4"/>
</dbReference>
<dbReference type="SUPFAM" id="SSF52058">
    <property type="entry name" value="L domain-like"/>
    <property type="match status" value="1"/>
</dbReference>
<dbReference type="PROSITE" id="PS51450">
    <property type="entry name" value="LRR"/>
    <property type="match status" value="5"/>
</dbReference>
<accession>Q3U3V8</accession>
<accession>B2RX67</accession>
<accession>Q7M740</accession>
<reference evidence="5" key="1">
    <citation type="journal article" date="2005" name="Science">
        <title>The transcriptional landscape of the mammalian genome.</title>
        <authorList>
            <person name="Carninci P."/>
            <person name="Kasukawa T."/>
            <person name="Katayama S."/>
            <person name="Gough J."/>
            <person name="Frith M.C."/>
            <person name="Maeda N."/>
            <person name="Oyama R."/>
            <person name="Ravasi T."/>
            <person name="Lenhard B."/>
            <person name="Wells C."/>
            <person name="Kodzius R."/>
            <person name="Shimokawa K."/>
            <person name="Bajic V.B."/>
            <person name="Brenner S.E."/>
            <person name="Batalov S."/>
            <person name="Forrest A.R."/>
            <person name="Zavolan M."/>
            <person name="Davis M.J."/>
            <person name="Wilming L.G."/>
            <person name="Aidinis V."/>
            <person name="Allen J.E."/>
            <person name="Ambesi-Impiombato A."/>
            <person name="Apweiler R."/>
            <person name="Aturaliya R.N."/>
            <person name="Bailey T.L."/>
            <person name="Bansal M."/>
            <person name="Baxter L."/>
            <person name="Beisel K.W."/>
            <person name="Bersano T."/>
            <person name="Bono H."/>
            <person name="Chalk A.M."/>
            <person name="Chiu K.P."/>
            <person name="Choudhary V."/>
            <person name="Christoffels A."/>
            <person name="Clutterbuck D.R."/>
            <person name="Crowe M.L."/>
            <person name="Dalla E."/>
            <person name="Dalrymple B.P."/>
            <person name="de Bono B."/>
            <person name="Della Gatta G."/>
            <person name="di Bernardo D."/>
            <person name="Down T."/>
            <person name="Engstrom P."/>
            <person name="Fagiolini M."/>
            <person name="Faulkner G."/>
            <person name="Fletcher C.F."/>
            <person name="Fukushima T."/>
            <person name="Furuno M."/>
            <person name="Futaki S."/>
            <person name="Gariboldi M."/>
            <person name="Georgii-Hemming P."/>
            <person name="Gingeras T.R."/>
            <person name="Gojobori T."/>
            <person name="Green R.E."/>
            <person name="Gustincich S."/>
            <person name="Harbers M."/>
            <person name="Hayashi Y."/>
            <person name="Hensch T.K."/>
            <person name="Hirokawa N."/>
            <person name="Hill D."/>
            <person name="Huminiecki L."/>
            <person name="Iacono M."/>
            <person name="Ikeo K."/>
            <person name="Iwama A."/>
            <person name="Ishikawa T."/>
            <person name="Jakt M."/>
            <person name="Kanapin A."/>
            <person name="Katoh M."/>
            <person name="Kawasawa Y."/>
            <person name="Kelso J."/>
            <person name="Kitamura H."/>
            <person name="Kitano H."/>
            <person name="Kollias G."/>
            <person name="Krishnan S.P."/>
            <person name="Kruger A."/>
            <person name="Kummerfeld S.K."/>
            <person name="Kurochkin I.V."/>
            <person name="Lareau L.F."/>
            <person name="Lazarevic D."/>
            <person name="Lipovich L."/>
            <person name="Liu J."/>
            <person name="Liuni S."/>
            <person name="McWilliam S."/>
            <person name="Madan Babu M."/>
            <person name="Madera M."/>
            <person name="Marchionni L."/>
            <person name="Matsuda H."/>
            <person name="Matsuzawa S."/>
            <person name="Miki H."/>
            <person name="Mignone F."/>
            <person name="Miyake S."/>
            <person name="Morris K."/>
            <person name="Mottagui-Tabar S."/>
            <person name="Mulder N."/>
            <person name="Nakano N."/>
            <person name="Nakauchi H."/>
            <person name="Ng P."/>
            <person name="Nilsson R."/>
            <person name="Nishiguchi S."/>
            <person name="Nishikawa S."/>
            <person name="Nori F."/>
            <person name="Ohara O."/>
            <person name="Okazaki Y."/>
            <person name="Orlando V."/>
            <person name="Pang K.C."/>
            <person name="Pavan W.J."/>
            <person name="Pavesi G."/>
            <person name="Pesole G."/>
            <person name="Petrovsky N."/>
            <person name="Piazza S."/>
            <person name="Reed J."/>
            <person name="Reid J.F."/>
            <person name="Ring B.Z."/>
            <person name="Ringwald M."/>
            <person name="Rost B."/>
            <person name="Ruan Y."/>
            <person name="Salzberg S.L."/>
            <person name="Sandelin A."/>
            <person name="Schneider C."/>
            <person name="Schoenbach C."/>
            <person name="Sekiguchi K."/>
            <person name="Semple C.A."/>
            <person name="Seno S."/>
            <person name="Sessa L."/>
            <person name="Sheng Y."/>
            <person name="Shibata Y."/>
            <person name="Shimada H."/>
            <person name="Shimada K."/>
            <person name="Silva D."/>
            <person name="Sinclair B."/>
            <person name="Sperling S."/>
            <person name="Stupka E."/>
            <person name="Sugiura K."/>
            <person name="Sultana R."/>
            <person name="Takenaka Y."/>
            <person name="Taki K."/>
            <person name="Tammoja K."/>
            <person name="Tan S.L."/>
            <person name="Tang S."/>
            <person name="Taylor M.S."/>
            <person name="Tegner J."/>
            <person name="Teichmann S.A."/>
            <person name="Ueda H.R."/>
            <person name="van Nimwegen E."/>
            <person name="Verardo R."/>
            <person name="Wei C.L."/>
            <person name="Yagi K."/>
            <person name="Yamanishi H."/>
            <person name="Zabarovsky E."/>
            <person name="Zhu S."/>
            <person name="Zimmer A."/>
            <person name="Hide W."/>
            <person name="Bult C."/>
            <person name="Grimmond S.M."/>
            <person name="Teasdale R.D."/>
            <person name="Liu E.T."/>
            <person name="Brusic V."/>
            <person name="Quackenbush J."/>
            <person name="Wahlestedt C."/>
            <person name="Mattick J.S."/>
            <person name="Hume D.A."/>
            <person name="Kai C."/>
            <person name="Sasaki D."/>
            <person name="Tomaru Y."/>
            <person name="Fukuda S."/>
            <person name="Kanamori-Katayama M."/>
            <person name="Suzuki M."/>
            <person name="Aoki J."/>
            <person name="Arakawa T."/>
            <person name="Iida J."/>
            <person name="Imamura K."/>
            <person name="Itoh M."/>
            <person name="Kato T."/>
            <person name="Kawaji H."/>
            <person name="Kawagashira N."/>
            <person name="Kawashima T."/>
            <person name="Kojima M."/>
            <person name="Kondo S."/>
            <person name="Konno H."/>
            <person name="Nakano K."/>
            <person name="Ninomiya N."/>
            <person name="Nishio T."/>
            <person name="Okada M."/>
            <person name="Plessy C."/>
            <person name="Shibata K."/>
            <person name="Shiraki T."/>
            <person name="Suzuki S."/>
            <person name="Tagami M."/>
            <person name="Waki K."/>
            <person name="Watahiki A."/>
            <person name="Okamura-Oho Y."/>
            <person name="Suzuki H."/>
            <person name="Kawai J."/>
            <person name="Hayashizaki Y."/>
        </authorList>
    </citation>
    <scope>NUCLEOTIDE SEQUENCE [LARGE SCALE MRNA]</scope>
    <source>
        <strain evidence="5">NOD</strain>
        <tissue evidence="5">Dendritic cell</tissue>
    </source>
</reference>
<reference key="2">
    <citation type="journal article" date="2004" name="Genome Res.">
        <title>The status, quality, and expansion of the NIH full-length cDNA project: the Mammalian Gene Collection (MGC).</title>
        <authorList>
            <consortium name="The MGC Project Team"/>
        </authorList>
    </citation>
    <scope>NUCLEOTIDE SEQUENCE [LARGE SCALE MRNA]</scope>
    <source>
        <tissue>Brain</tissue>
    </source>
</reference>
<reference evidence="4 6" key="3">
    <citation type="journal article" date="2003" name="BMC Genomics">
        <title>Molecular cloning, genomic characterization and over-expression of a novel gene, XRRA1, identified from human colorectal cancer cell HCT116Clone2_XRR and macaque testis.</title>
        <authorList>
            <person name="Mesak F.M."/>
            <person name="Osada N."/>
            <person name="Hashimoto K."/>
            <person name="Liu Q.Y."/>
            <person name="Ng C.E."/>
        </authorList>
    </citation>
    <scope>IDENTIFICATION</scope>
</reference>
<feature type="chain" id="PRO_0000318132" description="X-ray radiation resistance-associated protein 1">
    <location>
        <begin position="1"/>
        <end position="786"/>
    </location>
</feature>
<feature type="repeat" description="LRR 1">
    <location>
        <begin position="146"/>
        <end position="158"/>
    </location>
</feature>
<feature type="repeat" description="LRR 2">
    <location>
        <begin position="169"/>
        <end position="192"/>
    </location>
</feature>
<feature type="repeat" description="LRR 3">
    <location>
        <begin position="193"/>
        <end position="214"/>
    </location>
</feature>
<feature type="repeat" description="LRR 4">
    <location>
        <begin position="234"/>
        <end position="255"/>
    </location>
</feature>
<feature type="repeat" description="LRR 5">
    <location>
        <begin position="259"/>
        <end position="280"/>
    </location>
</feature>
<feature type="region of interest" description="Disordered" evidence="3">
    <location>
        <begin position="474"/>
        <end position="493"/>
    </location>
</feature>
<feature type="region of interest" description="Disordered" evidence="3">
    <location>
        <begin position="524"/>
        <end position="604"/>
    </location>
</feature>
<feature type="coiled-coil region" evidence="2">
    <location>
        <begin position="714"/>
        <end position="738"/>
    </location>
</feature>
<feature type="compositionally biased region" description="Polar residues" evidence="3">
    <location>
        <begin position="524"/>
        <end position="537"/>
    </location>
</feature>
<feature type="compositionally biased region" description="Polar residues" evidence="3">
    <location>
        <begin position="554"/>
        <end position="569"/>
    </location>
</feature>
<feature type="compositionally biased region" description="Basic and acidic residues" evidence="3">
    <location>
        <begin position="570"/>
        <end position="583"/>
    </location>
</feature>
<name>XRRA1_MOUSE</name>